<name>SECG_THEVO</name>
<feature type="chain" id="PRO_0000157282" description="Preprotein translocase subunit SecG">
    <location>
        <begin position="1"/>
        <end position="55"/>
    </location>
</feature>
<feature type="topological domain" description="Cytoplasmic" evidence="1">
    <location>
        <begin position="1"/>
        <end position="31"/>
    </location>
</feature>
<feature type="transmembrane region" description="Helical" evidence="1">
    <location>
        <begin position="32"/>
        <end position="51"/>
    </location>
</feature>
<feature type="topological domain" description="Extracellular" evidence="1">
    <location>
        <begin position="52"/>
        <end position="55"/>
    </location>
</feature>
<comment type="function">
    <text evidence="1">Involved in protein export. The function of the beta subunit is unknown, but it may be involved in stabilization of the trimeric complex (By similarity).</text>
</comment>
<comment type="subunit">
    <text evidence="1">Component of the protein translocase complex. Heterotrimer consisting of alpha (SecY), beta (SecG) and gamma (SecE) subunits. Can form oligomers of the heterotrimer (By similarity).</text>
</comment>
<comment type="subcellular location">
    <subcellularLocation>
        <location evidence="1">Cell membrane</location>
        <topology evidence="1">Single-pass membrane protein</topology>
    </subcellularLocation>
</comment>
<comment type="similarity">
    <text evidence="2">Belongs to the SEC61-beta family.</text>
</comment>
<comment type="sequence caution" evidence="2">
    <conflict type="erroneous initiation">
        <sequence resource="EMBL-CDS" id="BAB59464"/>
    </conflict>
</comment>
<accession>Q97BY3</accession>
<keyword id="KW-1003">Cell membrane</keyword>
<keyword id="KW-0472">Membrane</keyword>
<keyword id="KW-0653">Protein transport</keyword>
<keyword id="KW-0811">Translocation</keyword>
<keyword id="KW-0812">Transmembrane</keyword>
<keyword id="KW-1133">Transmembrane helix</keyword>
<keyword id="KW-0813">Transport</keyword>
<protein>
    <recommendedName>
        <fullName>Preprotein translocase subunit SecG</fullName>
    </recommendedName>
    <alternativeName>
        <fullName>Protein transport protein Sec61 subunit beta homolog</fullName>
    </alternativeName>
</protein>
<organism>
    <name type="scientific">Thermoplasma volcanium (strain ATCC 51530 / DSM 4299 / JCM 9571 / NBRC 15438 / GSS1)</name>
    <dbReference type="NCBI Taxonomy" id="273116"/>
    <lineage>
        <taxon>Archaea</taxon>
        <taxon>Methanobacteriati</taxon>
        <taxon>Thermoplasmatota</taxon>
        <taxon>Thermoplasmata</taxon>
        <taxon>Thermoplasmatales</taxon>
        <taxon>Thermoplasmataceae</taxon>
        <taxon>Thermoplasma</taxon>
    </lineage>
</organism>
<reference key="1">
    <citation type="journal article" date="2000" name="Proc. Natl. Acad. Sci. U.S.A.">
        <title>Archaeal adaptation to higher temperatures revealed by genomic sequence of Thermoplasma volcanium.</title>
        <authorList>
            <person name="Kawashima T."/>
            <person name="Amano N."/>
            <person name="Koike H."/>
            <person name="Makino S."/>
            <person name="Higuchi S."/>
            <person name="Kawashima-Ohya Y."/>
            <person name="Watanabe K."/>
            <person name="Yamazaki M."/>
            <person name="Kanehori K."/>
            <person name="Kawamoto T."/>
            <person name="Nunoshiba T."/>
            <person name="Yamamoto Y."/>
            <person name="Aramaki H."/>
            <person name="Makino K."/>
            <person name="Suzuki M."/>
        </authorList>
    </citation>
    <scope>NUCLEOTIDE SEQUENCE [LARGE SCALE GENOMIC DNA]</scope>
    <source>
        <strain>ATCC 51530 / DSM 4299 / JCM 9571 / NBRC 15438 / GSS1</strain>
    </source>
</reference>
<dbReference type="EMBL" id="BA000011">
    <property type="protein sequence ID" value="BAB59464.1"/>
    <property type="status" value="ALT_INIT"/>
    <property type="molecule type" value="Genomic_DNA"/>
</dbReference>
<dbReference type="RefSeq" id="WP_010916577.1">
    <property type="nucleotide sequence ID" value="NC_002689.2"/>
</dbReference>
<dbReference type="SMR" id="Q97BY3"/>
<dbReference type="STRING" id="273116.gene:9381098"/>
<dbReference type="PaxDb" id="273116-14324537"/>
<dbReference type="GeneID" id="1440835"/>
<dbReference type="KEGG" id="tvo:TVG0327161"/>
<dbReference type="eggNOG" id="arCOG02957">
    <property type="taxonomic scope" value="Archaea"/>
</dbReference>
<dbReference type="HOGENOM" id="CLU_208205_0_0_2"/>
<dbReference type="OrthoDB" id="43651at2157"/>
<dbReference type="Proteomes" id="UP000001017">
    <property type="component" value="Chromosome"/>
</dbReference>
<dbReference type="GO" id="GO:0005886">
    <property type="term" value="C:plasma membrane"/>
    <property type="evidence" value="ECO:0007669"/>
    <property type="project" value="UniProtKB-SubCell"/>
</dbReference>
<dbReference type="GO" id="GO:0015031">
    <property type="term" value="P:protein transport"/>
    <property type="evidence" value="ECO:0007669"/>
    <property type="project" value="UniProtKB-UniRule"/>
</dbReference>
<dbReference type="HAMAP" id="MF_00751">
    <property type="entry name" value="SecG"/>
    <property type="match status" value="1"/>
</dbReference>
<dbReference type="InterPro" id="IPR023531">
    <property type="entry name" value="Preprot_translocase_SecG"/>
</dbReference>
<dbReference type="InterPro" id="IPR016482">
    <property type="entry name" value="SecG/Sec61-beta/Sbh"/>
</dbReference>
<dbReference type="NCBIfam" id="NF002318">
    <property type="entry name" value="PRK01253.1"/>
    <property type="match status" value="1"/>
</dbReference>
<dbReference type="Pfam" id="PF03911">
    <property type="entry name" value="Sec61_beta"/>
    <property type="match status" value="1"/>
</dbReference>
<proteinExistence type="inferred from homology"/>
<evidence type="ECO:0000250" key="1"/>
<evidence type="ECO:0000305" key="2"/>
<gene>
    <name type="primary">secG</name>
    <name type="ordered locus">TV0322</name>
    <name type="ORF">TVG0327161</name>
</gene>
<sequence>MASDKKSEGFQSGAGLIRYFEEEEIKGPALDPKLVVYIGIAVAIMVELAKIFWPP</sequence>